<proteinExistence type="evidence at transcript level"/>
<organism>
    <name type="scientific">Sus scrofa</name>
    <name type="common">Pig</name>
    <dbReference type="NCBI Taxonomy" id="9823"/>
    <lineage>
        <taxon>Eukaryota</taxon>
        <taxon>Metazoa</taxon>
        <taxon>Chordata</taxon>
        <taxon>Craniata</taxon>
        <taxon>Vertebrata</taxon>
        <taxon>Euteleostomi</taxon>
        <taxon>Mammalia</taxon>
        <taxon>Eutheria</taxon>
        <taxon>Laurasiatheria</taxon>
        <taxon>Artiodactyla</taxon>
        <taxon>Suina</taxon>
        <taxon>Suidae</taxon>
        <taxon>Sus</taxon>
    </lineage>
</organism>
<feature type="signal peptide">
    <location>
        <begin position="1"/>
        <end position="31"/>
    </location>
</feature>
<feature type="chain" id="PRO_0000019008" description="SLA class II histocompatibility antigen, DQ haplotype C beta chain">
    <location>
        <begin position="32"/>
        <end position="261"/>
    </location>
</feature>
<feature type="topological domain" description="Extracellular" evidence="1">
    <location>
        <begin position="32"/>
        <end position="230"/>
    </location>
</feature>
<feature type="transmembrane region" description="Helical" evidence="1">
    <location>
        <begin position="231"/>
        <end position="251"/>
    </location>
</feature>
<feature type="topological domain" description="Cytoplasmic" evidence="1">
    <location>
        <begin position="252"/>
        <end position="261"/>
    </location>
</feature>
<feature type="domain" description="Ig-like C1-type">
    <location>
        <begin position="129"/>
        <end position="233"/>
    </location>
</feature>
<feature type="region of interest" description="Beta-1">
    <location>
        <begin position="32"/>
        <end position="126"/>
    </location>
</feature>
<feature type="region of interest" description="Beta-2">
    <location>
        <begin position="127"/>
        <end position="220"/>
    </location>
</feature>
<feature type="region of interest" description="Connecting peptide">
    <location>
        <begin position="221"/>
        <end position="230"/>
    </location>
</feature>
<feature type="glycosylation site" description="N-linked (GlcNAc...) asparagine" evidence="1">
    <location>
        <position position="51"/>
    </location>
</feature>
<feature type="disulfide bond" evidence="2">
    <location>
        <begin position="47"/>
        <end position="111"/>
    </location>
</feature>
<feature type="disulfide bond" evidence="2">
    <location>
        <begin position="149"/>
        <end position="205"/>
    </location>
</feature>
<reference key="1">
    <citation type="journal article" date="1990" name="J. Immunol.">
        <title>Class II genes of miniature swine. IV. Characterization and expression of two allelic class II DQB cDNA clones.</title>
        <authorList>
            <person name="Gustafsson K."/>
            <person name="Leguern C."/>
            <person name="Hirsch F."/>
            <person name="Germana S."/>
            <person name="Pratt K."/>
            <person name="Sachs D.H."/>
        </authorList>
    </citation>
    <scope>NUCLEOTIDE SEQUENCE [MRNA]</scope>
</reference>
<sequence length="261" mass="29550">MSGMVALRLPRGLWTAALTVMLVVLGAPVAEGRDSPQDFVFQFKGECYFYNGTQRVRGVARYIYNQEEHLRFDSDVGEFRAVTPLGRPEADSWNSQKDVLEQMRAEVDRVCKHNYQIEEGTTLQRRVQPTVTISPSKAEALNHHNLLVCAVTDFYPSQVKVQWFRNGQEETAGVVSTPLIRNGDWTYQVLVMLEMNLQRGDVYTCRVEHSSLQNPILVEWRAQSESAQSKMLSGVGGFVLGLIFLGLGLFIRHRSQKGLVR</sequence>
<protein>
    <recommendedName>
        <fullName>SLA class II histocompatibility antigen, DQ haplotype C beta chain</fullName>
    </recommendedName>
</protein>
<accession>P15982</accession>
<name>HB2C_PIG</name>
<evidence type="ECO:0000255" key="1"/>
<evidence type="ECO:0000255" key="2">
    <source>
        <dbReference type="PROSITE-ProRule" id="PRU00114"/>
    </source>
</evidence>
<evidence type="ECO:0000305" key="3"/>
<dbReference type="EMBL" id="M31497">
    <property type="protein sequence ID" value="AAA31084.1"/>
    <property type="molecule type" value="mRNA"/>
</dbReference>
<dbReference type="EMBL" id="M32117">
    <property type="protein sequence ID" value="AAA53110.1"/>
    <property type="molecule type" value="mRNA"/>
</dbReference>
<dbReference type="PIR" id="A60404">
    <property type="entry name" value="A60404"/>
</dbReference>
<dbReference type="RefSeq" id="NP_001107166.1">
    <property type="nucleotide sequence ID" value="NM_001113694.1"/>
</dbReference>
<dbReference type="SMR" id="P15982"/>
<dbReference type="FunCoup" id="P15982">
    <property type="interactions" value="215"/>
</dbReference>
<dbReference type="STRING" id="9823.ENSSSCP00000062346"/>
<dbReference type="GlyGen" id="P15982">
    <property type="glycosylation" value="1 site"/>
</dbReference>
<dbReference type="PaxDb" id="9823-ENSSSCP00000001575"/>
<dbReference type="PeptideAtlas" id="P15982"/>
<dbReference type="GeneID" id="100037921"/>
<dbReference type="KEGG" id="ssc:100037921"/>
<dbReference type="CTD" id="100037921"/>
<dbReference type="eggNOG" id="ENOG502RYBQ">
    <property type="taxonomic scope" value="Eukaryota"/>
</dbReference>
<dbReference type="InParanoid" id="P15982"/>
<dbReference type="OrthoDB" id="10043043at2759"/>
<dbReference type="Proteomes" id="UP000008227">
    <property type="component" value="Unplaced"/>
</dbReference>
<dbReference type="Proteomes" id="UP000314985">
    <property type="component" value="Unplaced"/>
</dbReference>
<dbReference type="Proteomes" id="UP000694570">
    <property type="component" value="Unplaced"/>
</dbReference>
<dbReference type="Proteomes" id="UP000694571">
    <property type="component" value="Unplaced"/>
</dbReference>
<dbReference type="Proteomes" id="UP000694720">
    <property type="component" value="Unplaced"/>
</dbReference>
<dbReference type="Proteomes" id="UP000694722">
    <property type="component" value="Unplaced"/>
</dbReference>
<dbReference type="Proteomes" id="UP000694723">
    <property type="component" value="Unplaced"/>
</dbReference>
<dbReference type="Proteomes" id="UP000694724">
    <property type="component" value="Unplaced"/>
</dbReference>
<dbReference type="Proteomes" id="UP000694725">
    <property type="component" value="Unplaced"/>
</dbReference>
<dbReference type="Proteomes" id="UP000694726">
    <property type="component" value="Unplaced"/>
</dbReference>
<dbReference type="Proteomes" id="UP000694727">
    <property type="component" value="Unplaced"/>
</dbReference>
<dbReference type="Proteomes" id="UP000694728">
    <property type="component" value="Unplaced"/>
</dbReference>
<dbReference type="GO" id="GO:0031902">
    <property type="term" value="C:late endosome membrane"/>
    <property type="evidence" value="ECO:0000318"/>
    <property type="project" value="GO_Central"/>
</dbReference>
<dbReference type="GO" id="GO:0005765">
    <property type="term" value="C:lysosomal membrane"/>
    <property type="evidence" value="ECO:0000318"/>
    <property type="project" value="GO_Central"/>
</dbReference>
<dbReference type="GO" id="GO:0042613">
    <property type="term" value="C:MHC class II protein complex"/>
    <property type="evidence" value="ECO:0000318"/>
    <property type="project" value="GO_Central"/>
</dbReference>
<dbReference type="GO" id="GO:0023026">
    <property type="term" value="F:MHC class II protein complex binding"/>
    <property type="evidence" value="ECO:0000318"/>
    <property type="project" value="GO_Central"/>
</dbReference>
<dbReference type="GO" id="GO:0042605">
    <property type="term" value="F:peptide antigen binding"/>
    <property type="evidence" value="ECO:0000318"/>
    <property type="project" value="GO_Central"/>
</dbReference>
<dbReference type="GO" id="GO:0002250">
    <property type="term" value="P:adaptive immune response"/>
    <property type="evidence" value="ECO:0007669"/>
    <property type="project" value="UniProtKB-KW"/>
</dbReference>
<dbReference type="GO" id="GO:0019886">
    <property type="term" value="P:antigen processing and presentation of exogenous peptide antigen via MHC class II"/>
    <property type="evidence" value="ECO:0000318"/>
    <property type="project" value="GO_Central"/>
</dbReference>
<dbReference type="GO" id="GO:0002503">
    <property type="term" value="P:peptide antigen assembly with MHC class II protein complex"/>
    <property type="evidence" value="ECO:0000318"/>
    <property type="project" value="GO_Central"/>
</dbReference>
<dbReference type="GO" id="GO:0050778">
    <property type="term" value="P:positive regulation of immune response"/>
    <property type="evidence" value="ECO:0000318"/>
    <property type="project" value="GO_Central"/>
</dbReference>
<dbReference type="GO" id="GO:0050870">
    <property type="term" value="P:positive regulation of T cell activation"/>
    <property type="evidence" value="ECO:0000318"/>
    <property type="project" value="GO_Central"/>
</dbReference>
<dbReference type="CDD" id="cd21001">
    <property type="entry name" value="IgC1_MHC_II_beta_HLA-DQ_I-A"/>
    <property type="match status" value="1"/>
</dbReference>
<dbReference type="FunFam" id="2.60.40.10:FF:000116">
    <property type="entry name" value="HLA class II histocompatibility antigen, DRB1-1 beta chain"/>
    <property type="match status" value="1"/>
</dbReference>
<dbReference type="FunFam" id="3.10.320.10:FF:000001">
    <property type="entry name" value="HLA class II histocompatibility antigen, DRB1-1 beta chain"/>
    <property type="match status" value="1"/>
</dbReference>
<dbReference type="Gene3D" id="3.10.320.10">
    <property type="entry name" value="Class II Histocompatibility Antigen, M Beta Chain, Chain B, domain 1"/>
    <property type="match status" value="1"/>
</dbReference>
<dbReference type="Gene3D" id="2.60.40.10">
    <property type="entry name" value="Immunoglobulins"/>
    <property type="match status" value="1"/>
</dbReference>
<dbReference type="InterPro" id="IPR007110">
    <property type="entry name" value="Ig-like_dom"/>
</dbReference>
<dbReference type="InterPro" id="IPR036179">
    <property type="entry name" value="Ig-like_dom_sf"/>
</dbReference>
<dbReference type="InterPro" id="IPR013783">
    <property type="entry name" value="Ig-like_fold"/>
</dbReference>
<dbReference type="InterPro" id="IPR003006">
    <property type="entry name" value="Ig/MHC_CS"/>
</dbReference>
<dbReference type="InterPro" id="IPR003597">
    <property type="entry name" value="Ig_C1-set"/>
</dbReference>
<dbReference type="InterPro" id="IPR050160">
    <property type="entry name" value="MHC/Immunoglobulin"/>
</dbReference>
<dbReference type="InterPro" id="IPR011162">
    <property type="entry name" value="MHC_I/II-like_Ag-recog"/>
</dbReference>
<dbReference type="InterPro" id="IPR014745">
    <property type="entry name" value="MHC_II_a/b_N"/>
</dbReference>
<dbReference type="InterPro" id="IPR000353">
    <property type="entry name" value="MHC_II_b_N"/>
</dbReference>
<dbReference type="PANTHER" id="PTHR19944:SF101">
    <property type="entry name" value="HLA CLASS II HISTOCOMPATIBILITY ANTIGEN, DQ BETA 1 CHAIN"/>
    <property type="match status" value="1"/>
</dbReference>
<dbReference type="PANTHER" id="PTHR19944">
    <property type="entry name" value="MHC CLASS II-RELATED"/>
    <property type="match status" value="1"/>
</dbReference>
<dbReference type="Pfam" id="PF07654">
    <property type="entry name" value="C1-set"/>
    <property type="match status" value="1"/>
</dbReference>
<dbReference type="Pfam" id="PF00969">
    <property type="entry name" value="MHC_II_beta"/>
    <property type="match status" value="1"/>
</dbReference>
<dbReference type="SMART" id="SM00407">
    <property type="entry name" value="IGc1"/>
    <property type="match status" value="1"/>
</dbReference>
<dbReference type="SMART" id="SM00921">
    <property type="entry name" value="MHC_II_beta"/>
    <property type="match status" value="1"/>
</dbReference>
<dbReference type="SUPFAM" id="SSF48726">
    <property type="entry name" value="Immunoglobulin"/>
    <property type="match status" value="1"/>
</dbReference>
<dbReference type="SUPFAM" id="SSF54452">
    <property type="entry name" value="MHC antigen-recognition domain"/>
    <property type="match status" value="1"/>
</dbReference>
<dbReference type="PROSITE" id="PS50835">
    <property type="entry name" value="IG_LIKE"/>
    <property type="match status" value="1"/>
</dbReference>
<dbReference type="PROSITE" id="PS00290">
    <property type="entry name" value="IG_MHC"/>
    <property type="match status" value="1"/>
</dbReference>
<keyword id="KW-1064">Adaptive immunity</keyword>
<keyword id="KW-1015">Disulfide bond</keyword>
<keyword id="KW-0325">Glycoprotein</keyword>
<keyword id="KW-0391">Immunity</keyword>
<keyword id="KW-0472">Membrane</keyword>
<keyword id="KW-0491">MHC II</keyword>
<keyword id="KW-1185">Reference proteome</keyword>
<keyword id="KW-0732">Signal</keyword>
<keyword id="KW-0812">Transmembrane</keyword>
<keyword id="KW-1133">Transmembrane helix</keyword>
<comment type="subcellular location">
    <subcellularLocation>
        <location evidence="3">Membrane</location>
        <topology evidence="3">Single-pass type I membrane protein</topology>
    </subcellularLocation>
</comment>
<comment type="similarity">
    <text evidence="3">Belongs to the MHC class II family.</text>
</comment>